<sequence>MNALNYLKHRFLFSKDKFWYAPFKQKQRRSIYSTFSLIVLSFIVSFFLIVAIPGIKGGTFLEIFTRLFKDRINIENFARQIAIYTLAALAFSFCMSVGVFNIGISGQMMAGANFGFMMILKVFPESFRPAFGGQIITILLMILGSVTVAMVVAALKVFFKVNEVVSAIMLNWVIVLVSAYLVGTYIKPEKTDTSQFYSIELPDAFALYNFSDVQQKYGWLTSLVIAIAAAIFIAVLMKFTVFGHKLKSTGLSVTGSQAAGYSVKKYQFLSFVISGILSGLLAAVVYTASFEKQLTFSDVGDFGITSVPITGFDGIAIGLIALNSPARIVIVSTIISFVTIGAKPAGLNAATASLVLGIMMYFAAIYNLMIYIKPWRMIVKLNISKMNEAAYDEFQNEMAANLETLSFQRFLDKQKRKHDKERMVWFDTKRFEEYQKKKQATLQTFHENSSQNLLQYWKQQLLVADVKRLTFKWDFLTFKHQQKYILRWYKGKNKKQTALENEFASLNEAISQKLEEK</sequence>
<keyword id="KW-1003">Cell membrane</keyword>
<keyword id="KW-0472">Membrane</keyword>
<keyword id="KW-1185">Reference proteome</keyword>
<keyword id="KW-0812">Transmembrane</keyword>
<keyword id="KW-1133">Transmembrane helix</keyword>
<feature type="chain" id="PRO_0000210424" description="Uncharacterized protein MG120 homolog">
    <location>
        <begin position="1"/>
        <end position="517"/>
    </location>
</feature>
<feature type="transmembrane region" description="Helical" evidence="1">
    <location>
        <begin position="35"/>
        <end position="55"/>
    </location>
</feature>
<feature type="transmembrane region" description="Helical" evidence="1">
    <location>
        <begin position="81"/>
        <end position="101"/>
    </location>
</feature>
<feature type="transmembrane region" description="Helical" evidence="1">
    <location>
        <begin position="102"/>
        <end position="122"/>
    </location>
</feature>
<feature type="transmembrane region" description="Helical" evidence="1">
    <location>
        <begin position="135"/>
        <end position="155"/>
    </location>
</feature>
<feature type="transmembrane region" description="Helical" evidence="1">
    <location>
        <begin position="164"/>
        <end position="184"/>
    </location>
</feature>
<feature type="transmembrane region" description="Helical" evidence="1">
    <location>
        <begin position="223"/>
        <end position="243"/>
    </location>
</feature>
<feature type="transmembrane region" description="Helical" evidence="1">
    <location>
        <begin position="268"/>
        <end position="288"/>
    </location>
</feature>
<feature type="transmembrane region" description="Helical" evidence="1">
    <location>
        <begin position="302"/>
        <end position="322"/>
    </location>
</feature>
<feature type="transmembrane region" description="Helical" evidence="1">
    <location>
        <begin position="328"/>
        <end position="348"/>
    </location>
</feature>
<feature type="transmembrane region" description="Helical" evidence="1">
    <location>
        <begin position="352"/>
        <end position="372"/>
    </location>
</feature>
<accession>P75515</accession>
<name>Y259_MYCPN</name>
<dbReference type="EMBL" id="U00089">
    <property type="protein sequence ID" value="AAB96222.1"/>
    <property type="molecule type" value="Genomic_DNA"/>
</dbReference>
<dbReference type="PIR" id="S73900">
    <property type="entry name" value="S73900"/>
</dbReference>
<dbReference type="RefSeq" id="NP_109947.1">
    <property type="nucleotide sequence ID" value="NC_000912.1"/>
</dbReference>
<dbReference type="RefSeq" id="WP_010874616.1">
    <property type="nucleotide sequence ID" value="NC_000912.1"/>
</dbReference>
<dbReference type="IntAct" id="P75515">
    <property type="interactions" value="1"/>
</dbReference>
<dbReference type="STRING" id="272634.MPN_259"/>
<dbReference type="EnsemblBacteria" id="AAB96222">
    <property type="protein sequence ID" value="AAB96222"/>
    <property type="gene ID" value="MPN_259"/>
</dbReference>
<dbReference type="KEGG" id="mpn:MPN_259"/>
<dbReference type="PATRIC" id="fig|272634.6.peg.278"/>
<dbReference type="HOGENOM" id="CLU_023404_0_1_14"/>
<dbReference type="OrthoDB" id="45037at2"/>
<dbReference type="BioCyc" id="MPNE272634:G1GJ3-408-MONOMER"/>
<dbReference type="Proteomes" id="UP000000808">
    <property type="component" value="Chromosome"/>
</dbReference>
<dbReference type="GO" id="GO:0005886">
    <property type="term" value="C:plasma membrane"/>
    <property type="evidence" value="ECO:0007669"/>
    <property type="project" value="UniProtKB-SubCell"/>
</dbReference>
<dbReference type="GO" id="GO:0022857">
    <property type="term" value="F:transmembrane transporter activity"/>
    <property type="evidence" value="ECO:0007669"/>
    <property type="project" value="InterPro"/>
</dbReference>
<dbReference type="CDD" id="cd06580">
    <property type="entry name" value="TM_PBP1_transp_TpRbsC_like"/>
    <property type="match status" value="1"/>
</dbReference>
<dbReference type="InterPro" id="IPR001851">
    <property type="entry name" value="ABC_transp_permease"/>
</dbReference>
<dbReference type="PANTHER" id="PTHR43370:SF1">
    <property type="entry name" value="GUANOSINE ABC TRANSPORTER PERMEASE PROTEIN NUPQ"/>
    <property type="match status" value="1"/>
</dbReference>
<dbReference type="PANTHER" id="PTHR43370">
    <property type="entry name" value="SUGAR ABC TRANSPORTER INTEGRAL MEMBRANE PROTEIN-RELATED"/>
    <property type="match status" value="1"/>
</dbReference>
<dbReference type="Pfam" id="PF02653">
    <property type="entry name" value="BPD_transp_2"/>
    <property type="match status" value="1"/>
</dbReference>
<evidence type="ECO:0000255" key="1"/>
<evidence type="ECO:0000305" key="2"/>
<proteinExistence type="predicted"/>
<gene>
    <name type="ordered locus">MPN_259</name>
    <name type="ORF">A65_orf517</name>
    <name type="ORF">MP574</name>
</gene>
<reference key="1">
    <citation type="journal article" date="1996" name="Nucleic Acids Res.">
        <title>Complete sequence analysis of the genome of the bacterium Mycoplasma pneumoniae.</title>
        <authorList>
            <person name="Himmelreich R."/>
            <person name="Hilbert H."/>
            <person name="Plagens H."/>
            <person name="Pirkl E."/>
            <person name="Li B.-C."/>
            <person name="Herrmann R."/>
        </authorList>
    </citation>
    <scope>NUCLEOTIDE SEQUENCE [LARGE SCALE GENOMIC DNA]</scope>
    <source>
        <strain>ATCC 29342 / M129 / Subtype 1</strain>
    </source>
</reference>
<comment type="subcellular location">
    <subcellularLocation>
        <location evidence="2">Cell membrane</location>
        <topology evidence="2">Multi-pass membrane protein</topology>
    </subcellularLocation>
</comment>
<organism>
    <name type="scientific">Mycoplasma pneumoniae (strain ATCC 29342 / M129 / Subtype 1)</name>
    <name type="common">Mycoplasmoides pneumoniae</name>
    <dbReference type="NCBI Taxonomy" id="272634"/>
    <lineage>
        <taxon>Bacteria</taxon>
        <taxon>Bacillati</taxon>
        <taxon>Mycoplasmatota</taxon>
        <taxon>Mycoplasmoidales</taxon>
        <taxon>Mycoplasmoidaceae</taxon>
        <taxon>Mycoplasmoides</taxon>
    </lineage>
</organism>
<protein>
    <recommendedName>
        <fullName>Uncharacterized protein MG120 homolog</fullName>
    </recommendedName>
</protein>